<protein>
    <recommendedName>
        <fullName evidence="1">Urease subunit beta</fullName>
        <ecNumber evidence="1">3.5.1.5</ecNumber>
    </recommendedName>
    <alternativeName>
        <fullName evidence="1">Urea amidohydrolase subunit beta</fullName>
    </alternativeName>
</protein>
<dbReference type="EC" id="3.5.1.5" evidence="1"/>
<dbReference type="EMBL" id="CP000521">
    <property type="protein sequence ID" value="ABO11445.2"/>
    <property type="molecule type" value="Genomic_DNA"/>
</dbReference>
<dbReference type="RefSeq" id="WP_000612143.1">
    <property type="nucleotide sequence ID" value="NZ_CP053098.1"/>
</dbReference>
<dbReference type="SMR" id="A3M3F1"/>
<dbReference type="KEGG" id="acb:A1S_1013"/>
<dbReference type="HOGENOM" id="CLU_129707_1_1_6"/>
<dbReference type="UniPathway" id="UPA00258">
    <property type="reaction ID" value="UER00370"/>
</dbReference>
<dbReference type="GO" id="GO:0035550">
    <property type="term" value="C:urease complex"/>
    <property type="evidence" value="ECO:0007669"/>
    <property type="project" value="InterPro"/>
</dbReference>
<dbReference type="GO" id="GO:0009039">
    <property type="term" value="F:urease activity"/>
    <property type="evidence" value="ECO:0007669"/>
    <property type="project" value="UniProtKB-UniRule"/>
</dbReference>
<dbReference type="GO" id="GO:0043419">
    <property type="term" value="P:urea catabolic process"/>
    <property type="evidence" value="ECO:0007669"/>
    <property type="project" value="UniProtKB-UniRule"/>
</dbReference>
<dbReference type="CDD" id="cd00407">
    <property type="entry name" value="Urease_beta"/>
    <property type="match status" value="1"/>
</dbReference>
<dbReference type="FunFam" id="2.10.150.10:FF:000001">
    <property type="entry name" value="Urease subunit beta"/>
    <property type="match status" value="1"/>
</dbReference>
<dbReference type="Gene3D" id="2.10.150.10">
    <property type="entry name" value="Urease, beta subunit"/>
    <property type="match status" value="1"/>
</dbReference>
<dbReference type="HAMAP" id="MF_01954">
    <property type="entry name" value="Urease_beta"/>
    <property type="match status" value="1"/>
</dbReference>
<dbReference type="InterPro" id="IPR002019">
    <property type="entry name" value="Urease_beta-like"/>
</dbReference>
<dbReference type="InterPro" id="IPR036461">
    <property type="entry name" value="Urease_betasu_sf"/>
</dbReference>
<dbReference type="InterPro" id="IPR050069">
    <property type="entry name" value="Urease_subunit"/>
</dbReference>
<dbReference type="NCBIfam" id="NF009682">
    <property type="entry name" value="PRK13203.1"/>
    <property type="match status" value="1"/>
</dbReference>
<dbReference type="NCBIfam" id="TIGR00192">
    <property type="entry name" value="urease_beta"/>
    <property type="match status" value="1"/>
</dbReference>
<dbReference type="PANTHER" id="PTHR33569">
    <property type="entry name" value="UREASE"/>
    <property type="match status" value="1"/>
</dbReference>
<dbReference type="PANTHER" id="PTHR33569:SF1">
    <property type="entry name" value="UREASE"/>
    <property type="match status" value="1"/>
</dbReference>
<dbReference type="Pfam" id="PF00699">
    <property type="entry name" value="Urease_beta"/>
    <property type="match status" value="1"/>
</dbReference>
<dbReference type="SUPFAM" id="SSF51278">
    <property type="entry name" value="Urease, beta-subunit"/>
    <property type="match status" value="1"/>
</dbReference>
<reference key="1">
    <citation type="journal article" date="2007" name="Genes Dev.">
        <title>New insights into Acinetobacter baumannii pathogenesis revealed by high-density pyrosequencing and transposon mutagenesis.</title>
        <authorList>
            <person name="Smith M.G."/>
            <person name="Gianoulis T.A."/>
            <person name="Pukatzki S."/>
            <person name="Mekalanos J.J."/>
            <person name="Ornston L.N."/>
            <person name="Gerstein M."/>
            <person name="Snyder M."/>
        </authorList>
    </citation>
    <scope>NUCLEOTIDE SEQUENCE [LARGE SCALE GENOMIC DNA]</scope>
    <source>
        <strain>ATCC 17978 / DSM 105126 / CIP 53.77 / LMG 1025 / NCDC KC755 / 5377</strain>
    </source>
</reference>
<comment type="catalytic activity">
    <reaction evidence="1">
        <text>urea + 2 H2O + H(+) = hydrogencarbonate + 2 NH4(+)</text>
        <dbReference type="Rhea" id="RHEA:20557"/>
        <dbReference type="ChEBI" id="CHEBI:15377"/>
        <dbReference type="ChEBI" id="CHEBI:15378"/>
        <dbReference type="ChEBI" id="CHEBI:16199"/>
        <dbReference type="ChEBI" id="CHEBI:17544"/>
        <dbReference type="ChEBI" id="CHEBI:28938"/>
        <dbReference type="EC" id="3.5.1.5"/>
    </reaction>
</comment>
<comment type="pathway">
    <text evidence="1">Nitrogen metabolism; urea degradation; CO(2) and NH(3) from urea (urease route): step 1/1.</text>
</comment>
<comment type="subunit">
    <text evidence="1">Heterotrimer of UreA (gamma), UreB (beta) and UreC (alpha) subunits. Three heterotrimers associate to form the active enzyme.</text>
</comment>
<comment type="subcellular location">
    <subcellularLocation>
        <location evidence="1">Cytoplasm</location>
    </subcellularLocation>
</comment>
<comment type="similarity">
    <text evidence="1">Belongs to the urease beta subunit family.</text>
</comment>
<evidence type="ECO:0000255" key="1">
    <source>
        <dbReference type="HAMAP-Rule" id="MF_01954"/>
    </source>
</evidence>
<organism>
    <name type="scientific">Acinetobacter baumannii (strain ATCC 17978 / DSM 105126 / CIP 53.77 / LMG 1025 / NCDC KC755 / 5377)</name>
    <dbReference type="NCBI Taxonomy" id="400667"/>
    <lineage>
        <taxon>Bacteria</taxon>
        <taxon>Pseudomonadati</taxon>
        <taxon>Pseudomonadota</taxon>
        <taxon>Gammaproteobacteria</taxon>
        <taxon>Moraxellales</taxon>
        <taxon>Moraxellaceae</taxon>
        <taxon>Acinetobacter</taxon>
        <taxon>Acinetobacter calcoaceticus/baumannii complex</taxon>
    </lineage>
</organism>
<accession>A3M3F1</accession>
<keyword id="KW-0963">Cytoplasm</keyword>
<keyword id="KW-0378">Hydrolase</keyword>
<gene>
    <name evidence="1" type="primary">ureB</name>
    <name type="ordered locus">A1S_1013</name>
</gene>
<feature type="chain" id="PRO_1000188905" description="Urease subunit beta">
    <location>
        <begin position="1"/>
        <end position="106"/>
    </location>
</feature>
<sequence>MIPGEVITPETDIELNVGRETLKVVVANLGDRPIQVGSHFHFYEANDALQFDREAVKGFRLNIAAGTAIRFEPGQSREVELVALAGKREVYGFAGRVMGRLDENVD</sequence>
<proteinExistence type="inferred from homology"/>
<name>URE2_ACIBT</name>